<protein>
    <recommendedName>
        <fullName evidence="1">4-hydroxy-tetrahydrodipicolinate synthase</fullName>
        <shortName evidence="1">HTPA synthase</shortName>
        <ecNumber evidence="1">4.3.3.7</ecNumber>
    </recommendedName>
</protein>
<dbReference type="EC" id="4.3.3.7" evidence="1"/>
<dbReference type="EMBL" id="AJ293311">
    <property type="protein sequence ID" value="CAC33657.1"/>
    <property type="molecule type" value="Genomic_DNA"/>
</dbReference>
<dbReference type="RefSeq" id="WP_012150786.1">
    <property type="nucleotide sequence ID" value="NZ_CP114277.2"/>
</dbReference>
<dbReference type="SMR" id="Q9AKJ9"/>
<dbReference type="GeneID" id="79937339"/>
<dbReference type="OMA" id="GMDACVP"/>
<dbReference type="UniPathway" id="UPA00034">
    <property type="reaction ID" value="UER00017"/>
</dbReference>
<dbReference type="GO" id="GO:0005737">
    <property type="term" value="C:cytoplasm"/>
    <property type="evidence" value="ECO:0007669"/>
    <property type="project" value="UniProtKB-SubCell"/>
</dbReference>
<dbReference type="GO" id="GO:0008700">
    <property type="term" value="F:(R,S)-4-hydroxy-2-oxoglutarate aldolase activity"/>
    <property type="evidence" value="ECO:0007669"/>
    <property type="project" value="TreeGrafter"/>
</dbReference>
<dbReference type="GO" id="GO:0008840">
    <property type="term" value="F:4-hydroxy-tetrahydrodipicolinate synthase activity"/>
    <property type="evidence" value="ECO:0007669"/>
    <property type="project" value="UniProtKB-UniRule"/>
</dbReference>
<dbReference type="GO" id="GO:0019877">
    <property type="term" value="P:diaminopimelate biosynthetic process"/>
    <property type="evidence" value="ECO:0007669"/>
    <property type="project" value="UniProtKB-UniRule"/>
</dbReference>
<dbReference type="GO" id="GO:0009436">
    <property type="term" value="P:glyoxylate catabolic process"/>
    <property type="evidence" value="ECO:0007669"/>
    <property type="project" value="TreeGrafter"/>
</dbReference>
<dbReference type="GO" id="GO:0009089">
    <property type="term" value="P:lysine biosynthetic process via diaminopimelate"/>
    <property type="evidence" value="ECO:0007669"/>
    <property type="project" value="UniProtKB-UniRule"/>
</dbReference>
<dbReference type="CDD" id="cd00950">
    <property type="entry name" value="DHDPS"/>
    <property type="match status" value="1"/>
</dbReference>
<dbReference type="Gene3D" id="3.20.20.70">
    <property type="entry name" value="Aldolase class I"/>
    <property type="match status" value="1"/>
</dbReference>
<dbReference type="HAMAP" id="MF_00418">
    <property type="entry name" value="DapA"/>
    <property type="match status" value="1"/>
</dbReference>
<dbReference type="InterPro" id="IPR013785">
    <property type="entry name" value="Aldolase_TIM"/>
</dbReference>
<dbReference type="InterPro" id="IPR005263">
    <property type="entry name" value="DapA"/>
</dbReference>
<dbReference type="InterPro" id="IPR002220">
    <property type="entry name" value="DapA-like"/>
</dbReference>
<dbReference type="InterPro" id="IPR020625">
    <property type="entry name" value="Schiff_base-form_aldolases_AS"/>
</dbReference>
<dbReference type="InterPro" id="IPR020624">
    <property type="entry name" value="Schiff_base-form_aldolases_CS"/>
</dbReference>
<dbReference type="NCBIfam" id="TIGR00674">
    <property type="entry name" value="dapA"/>
    <property type="match status" value="1"/>
</dbReference>
<dbReference type="PANTHER" id="PTHR12128:SF66">
    <property type="entry name" value="4-HYDROXY-2-OXOGLUTARATE ALDOLASE, MITOCHONDRIAL"/>
    <property type="match status" value="1"/>
</dbReference>
<dbReference type="PANTHER" id="PTHR12128">
    <property type="entry name" value="DIHYDRODIPICOLINATE SYNTHASE"/>
    <property type="match status" value="1"/>
</dbReference>
<dbReference type="Pfam" id="PF00701">
    <property type="entry name" value="DHDPS"/>
    <property type="match status" value="1"/>
</dbReference>
<dbReference type="PIRSF" id="PIRSF001365">
    <property type="entry name" value="DHDPS"/>
    <property type="match status" value="1"/>
</dbReference>
<dbReference type="PRINTS" id="PR00146">
    <property type="entry name" value="DHPICSNTHASE"/>
</dbReference>
<dbReference type="SMART" id="SM01130">
    <property type="entry name" value="DHDPS"/>
    <property type="match status" value="1"/>
</dbReference>
<dbReference type="SUPFAM" id="SSF51569">
    <property type="entry name" value="Aldolase"/>
    <property type="match status" value="1"/>
</dbReference>
<dbReference type="PROSITE" id="PS00665">
    <property type="entry name" value="DHDPS_1"/>
    <property type="match status" value="1"/>
</dbReference>
<dbReference type="PROSITE" id="PS00666">
    <property type="entry name" value="DHDPS_2"/>
    <property type="match status" value="1"/>
</dbReference>
<keyword id="KW-0028">Amino-acid biosynthesis</keyword>
<keyword id="KW-0963">Cytoplasm</keyword>
<keyword id="KW-0220">Diaminopimelate biosynthesis</keyword>
<keyword id="KW-0456">Lyase</keyword>
<keyword id="KW-0457">Lysine biosynthesis</keyword>
<keyword id="KW-0704">Schiff base</keyword>
<reference key="1">
    <citation type="journal article" date="2001" name="Mol. Biol. Evol.">
        <title>Pseudogenes, junk DNA, and the dynamics of Rickettsia genomes.</title>
        <authorList>
            <person name="Andersson J.O."/>
            <person name="Andersson S.G.E."/>
        </authorList>
    </citation>
    <scope>NUCLEOTIDE SEQUENCE [GENOMIC DNA]</scope>
    <source>
        <strain>84-21C</strain>
    </source>
</reference>
<accession>Q9AKJ9</accession>
<feature type="chain" id="PRO_0000103147" description="4-hydroxy-tetrahydrodipicolinate synthase">
    <location>
        <begin position="1"/>
        <end position="294"/>
    </location>
</feature>
<feature type="active site" description="Proton donor/acceptor" evidence="1">
    <location>
        <position position="135"/>
    </location>
</feature>
<feature type="active site" description="Schiff-base intermediate with substrate" evidence="1">
    <location>
        <position position="163"/>
    </location>
</feature>
<feature type="binding site" evidence="1">
    <location>
        <position position="47"/>
    </location>
    <ligand>
        <name>pyruvate</name>
        <dbReference type="ChEBI" id="CHEBI:15361"/>
    </ligand>
</feature>
<feature type="binding site" evidence="1">
    <location>
        <position position="205"/>
    </location>
    <ligand>
        <name>pyruvate</name>
        <dbReference type="ChEBI" id="CHEBI:15361"/>
    </ligand>
</feature>
<feature type="site" description="Part of a proton relay during catalysis" evidence="1">
    <location>
        <position position="46"/>
    </location>
</feature>
<feature type="site" description="Part of a proton relay during catalysis" evidence="1">
    <location>
        <position position="109"/>
    </location>
</feature>
<proteinExistence type="inferred from homology"/>
<name>DAPA_RICRI</name>
<comment type="function">
    <text evidence="1">Catalyzes the condensation of (S)-aspartate-beta-semialdehyde [(S)-ASA] and pyruvate to 4-hydroxy-tetrahydrodipicolinate (HTPA).</text>
</comment>
<comment type="catalytic activity">
    <reaction evidence="1">
        <text>L-aspartate 4-semialdehyde + pyruvate = (2S,4S)-4-hydroxy-2,3,4,5-tetrahydrodipicolinate + H2O + H(+)</text>
        <dbReference type="Rhea" id="RHEA:34171"/>
        <dbReference type="ChEBI" id="CHEBI:15361"/>
        <dbReference type="ChEBI" id="CHEBI:15377"/>
        <dbReference type="ChEBI" id="CHEBI:15378"/>
        <dbReference type="ChEBI" id="CHEBI:67139"/>
        <dbReference type="ChEBI" id="CHEBI:537519"/>
        <dbReference type="EC" id="4.3.3.7"/>
    </reaction>
</comment>
<comment type="pathway">
    <text evidence="1">Amino-acid biosynthesis; L-lysine biosynthesis via DAP pathway; (S)-tetrahydrodipicolinate from L-aspartate: step 3/4.</text>
</comment>
<comment type="subunit">
    <text evidence="1">Homotetramer; dimer of dimers.</text>
</comment>
<comment type="subcellular location">
    <subcellularLocation>
        <location evidence="1">Cytoplasm</location>
    </subcellularLocation>
</comment>
<comment type="similarity">
    <text evidence="1">Belongs to the DapA family.</text>
</comment>
<comment type="caution">
    <text evidence="2">Was originally thought to be a dihydrodipicolinate synthase (DHDPS), catalyzing the condensation of (S)-aspartate-beta-semialdehyde [(S)-ASA] and pyruvate to dihydrodipicolinate (DHDP). However, it was shown in E.coli that the product of the enzymatic reaction is not dihydrodipicolinate but in fact (4S)-4-hydroxy-2,3,4,5-tetrahydro-(2S)-dipicolinic acid (HTPA), and that the consecutive dehydration reaction leading to DHDP is not spontaneous but catalyzed by DapB.</text>
</comment>
<gene>
    <name evidence="1" type="primary">dapA</name>
</gene>
<sequence length="294" mass="32490">MHNIFKGLITALITPFKDNKLDLYALERIVKHQIKHEVDAILIAGSTGESSSLSFEEYKLLLQTSVEIVNKCIPIISGCSSNNTTYARALAAESTKIGVDGFMASPPSYVKPTQHGIYKHFEALHEACNLPIMLYSAPTRSGVDFSDETILRLSKLPRILALKDCGVDLERPLRIRATVKKDFNILTGNDEVVLAFNAQGGVGWTSVASNIVPNICKELLEKWNKNDTKGALEIHQKLLPLYTALFVESNPIPIKYAAHYLGLCENEIRPPLTEASDSAKKQIENIITSLSIKI</sequence>
<organism>
    <name type="scientific">Rickettsia rickettsii</name>
    <dbReference type="NCBI Taxonomy" id="783"/>
    <lineage>
        <taxon>Bacteria</taxon>
        <taxon>Pseudomonadati</taxon>
        <taxon>Pseudomonadota</taxon>
        <taxon>Alphaproteobacteria</taxon>
        <taxon>Rickettsiales</taxon>
        <taxon>Rickettsiaceae</taxon>
        <taxon>Rickettsieae</taxon>
        <taxon>Rickettsia</taxon>
        <taxon>spotted fever group</taxon>
    </lineage>
</organism>
<evidence type="ECO:0000255" key="1">
    <source>
        <dbReference type="HAMAP-Rule" id="MF_00418"/>
    </source>
</evidence>
<evidence type="ECO:0000305" key="2"/>